<protein>
    <recommendedName>
        <fullName>CYC02 protein</fullName>
    </recommendedName>
</protein>
<comment type="function">
    <text>May be involved in the control of the cell cycle at the G1/S start transition.</text>
</comment>
<comment type="developmental stage">
    <text>Preferentially expressed at the G1/S boundary during the cell cycle in synchronized cultures of Catharanthus roseus cells. CYC02 is also expressed in cells arrested at the G1 phase.</text>
</comment>
<comment type="similarity">
    <text evidence="1">Belongs to the GRP family.</text>
</comment>
<feature type="chain" id="PRO_0000079748" description="CYC02 protein">
    <location>
        <begin position="1"/>
        <end position="101"/>
    </location>
</feature>
<feature type="repeat" description="1; approximate">
    <location>
        <begin position="42"/>
        <end position="64"/>
    </location>
</feature>
<feature type="repeat" description="2; approximate">
    <location>
        <begin position="79"/>
        <end position="101"/>
    </location>
</feature>
<feature type="region of interest" description="2 X approximate repeats">
    <location>
        <begin position="42"/>
        <end position="101"/>
    </location>
</feature>
<name>CYC02_CATRO</name>
<organism>
    <name type="scientific">Catharanthus roseus</name>
    <name type="common">Madagascar periwinkle</name>
    <name type="synonym">Vinca rosea</name>
    <dbReference type="NCBI Taxonomy" id="4058"/>
    <lineage>
        <taxon>Eukaryota</taxon>
        <taxon>Viridiplantae</taxon>
        <taxon>Streptophyta</taxon>
        <taxon>Embryophyta</taxon>
        <taxon>Tracheophyta</taxon>
        <taxon>Spermatophyta</taxon>
        <taxon>Magnoliopsida</taxon>
        <taxon>eudicotyledons</taxon>
        <taxon>Gunneridae</taxon>
        <taxon>Pentapetalae</taxon>
        <taxon>asterids</taxon>
        <taxon>lamiids</taxon>
        <taxon>Gentianales</taxon>
        <taxon>Apocynaceae</taxon>
        <taxon>Rauvolfioideae</taxon>
        <taxon>Vinceae</taxon>
        <taxon>Catharanthinae</taxon>
        <taxon>Catharanthus</taxon>
    </lineage>
</organism>
<keyword id="KW-0131">Cell cycle</keyword>
<keyword id="KW-0132">Cell division</keyword>
<keyword id="KW-0338">Growth arrest</keyword>
<keyword id="KW-0677">Repeat</keyword>
<dbReference type="EMBL" id="M63732">
    <property type="protein sequence ID" value="AAA33107.1"/>
    <property type="molecule type" value="mRNA"/>
</dbReference>
<dbReference type="EMBL" id="D90309">
    <property type="protein sequence ID" value="BAA14339.1"/>
    <property type="molecule type" value="mRNA"/>
</dbReference>
<dbReference type="PIR" id="JQ0877">
    <property type="entry name" value="JQ0877"/>
</dbReference>
<dbReference type="OrthoDB" id="1808065at2759"/>
<dbReference type="GO" id="GO:0051301">
    <property type="term" value="P:cell division"/>
    <property type="evidence" value="ECO:0007669"/>
    <property type="project" value="UniProtKB-KW"/>
</dbReference>
<dbReference type="GO" id="GO:0051726">
    <property type="term" value="P:regulation of cell cycle"/>
    <property type="evidence" value="ECO:0007669"/>
    <property type="project" value="UniProtKB-KW"/>
</dbReference>
<sequence>MASSKTFFLLFALLFALALLVSTEAAASEESTKTGSVEGVKDAVCHHGCCRWFHHRCVRCCRSAEEVSVSDTENNAAADAHCRHGCCRWFHGRCIRCCPSA</sequence>
<proteinExistence type="evidence at transcript level"/>
<accession>P25923</accession>
<evidence type="ECO:0000305" key="1"/>
<reference key="1">
    <citation type="journal article" date="1991" name="Plant Physiol.">
        <title>Isolation of genes that are preferentially expressed at the G-1/S boundary during the cell cycle in synchronized cultures of Catharanthus roseus cells.</title>
        <authorList>
            <person name="Kodama H."/>
            <person name="Ito M."/>
            <person name="Hattori T."/>
            <person name="Nakamura K."/>
            <person name="Komamine A."/>
        </authorList>
    </citation>
    <scope>NUCLEOTIDE SEQUENCE [MRNA]</scope>
</reference>
<gene>
    <name type="primary">CYC02</name>
</gene>